<feature type="chain" id="PRO_0000194636" description="Photosystem I reaction center subunit VIII">
    <location>
        <begin position="1"/>
        <end position="36"/>
    </location>
</feature>
<feature type="transmembrane region" description="Helical" evidence="1">
    <location>
        <begin position="7"/>
        <end position="29"/>
    </location>
</feature>
<sequence>MTASYLPSILVPLVGILLPAVTMASLFLYIERDEIL</sequence>
<name>PSAI_ADICA</name>
<reference key="1">
    <citation type="journal article" date="2003" name="DNA Res.">
        <title>Complete nucleotide sequence of the chloroplast genome from a leptosporangiate fern, Adiantum capillus-veneris L.</title>
        <authorList>
            <person name="Wolf P.G."/>
            <person name="Rowe C.A."/>
            <person name="Sinclair R.B."/>
            <person name="Hasebe M."/>
        </authorList>
    </citation>
    <scope>NUCLEOTIDE SEQUENCE [LARGE SCALE GENOMIC DNA]</scope>
</reference>
<reference key="2">
    <citation type="journal article" date="2004" name="Gene">
        <title>High levels of RNA editing in a vascular plant chloroplast genome: analysis of transcripts from the fern Adiantum capillus-veneris.</title>
        <authorList>
            <person name="Wolf P.G."/>
            <person name="Rowe C.A."/>
            <person name="Hasebe M."/>
        </authorList>
    </citation>
    <scope>NUCLEOTIDE SEQUENCE [GENOMIC DNA]</scope>
    <scope>ABSENCE OF RNA EDITING</scope>
    <source>
        <tissue>Frond</tissue>
    </source>
</reference>
<comment type="function">
    <text evidence="1">May help in the organization of the PsaL subunit.</text>
</comment>
<comment type="subcellular location">
    <subcellularLocation>
        <location evidence="1">Plastid</location>
        <location evidence="1">Chloroplast thylakoid membrane</location>
        <topology evidence="1">Single-pass membrane protein</topology>
    </subcellularLocation>
</comment>
<comment type="similarity">
    <text evidence="1">Belongs to the PsaI family.</text>
</comment>
<keyword id="KW-0150">Chloroplast</keyword>
<keyword id="KW-0472">Membrane</keyword>
<keyword id="KW-0602">Photosynthesis</keyword>
<keyword id="KW-0603">Photosystem I</keyword>
<keyword id="KW-0934">Plastid</keyword>
<keyword id="KW-0793">Thylakoid</keyword>
<keyword id="KW-0812">Transmembrane</keyword>
<keyword id="KW-1133">Transmembrane helix</keyword>
<geneLocation type="chloroplast"/>
<dbReference type="EMBL" id="AY178864">
    <property type="protein sequence ID" value="AAP29401.1"/>
    <property type="molecule type" value="Genomic_DNA"/>
</dbReference>
<dbReference type="RefSeq" id="NP_848070.1">
    <property type="nucleotide sequence ID" value="NC_004766.1"/>
</dbReference>
<dbReference type="SMR" id="Q85FL2"/>
<dbReference type="GeneID" id="807400"/>
<dbReference type="GO" id="GO:0009535">
    <property type="term" value="C:chloroplast thylakoid membrane"/>
    <property type="evidence" value="ECO:0007669"/>
    <property type="project" value="UniProtKB-SubCell"/>
</dbReference>
<dbReference type="GO" id="GO:0009522">
    <property type="term" value="C:photosystem I"/>
    <property type="evidence" value="ECO:0007669"/>
    <property type="project" value="UniProtKB-KW"/>
</dbReference>
<dbReference type="GO" id="GO:0015979">
    <property type="term" value="P:photosynthesis"/>
    <property type="evidence" value="ECO:0007669"/>
    <property type="project" value="UniProtKB-UniRule"/>
</dbReference>
<dbReference type="HAMAP" id="MF_00431">
    <property type="entry name" value="PSI_PsaI"/>
    <property type="match status" value="1"/>
</dbReference>
<dbReference type="InterPro" id="IPR001302">
    <property type="entry name" value="PSI_PsaI"/>
</dbReference>
<dbReference type="InterPro" id="IPR036357">
    <property type="entry name" value="PSI_PsaI_sf"/>
</dbReference>
<dbReference type="NCBIfam" id="NF008830">
    <property type="entry name" value="PRK11877.1"/>
    <property type="match status" value="1"/>
</dbReference>
<dbReference type="NCBIfam" id="TIGR03052">
    <property type="entry name" value="PS_I_psaI"/>
    <property type="match status" value="1"/>
</dbReference>
<dbReference type="PANTHER" id="PTHR35775">
    <property type="match status" value="1"/>
</dbReference>
<dbReference type="PANTHER" id="PTHR35775:SF2">
    <property type="entry name" value="PHOTOSYSTEM I REACTION CENTER SUBUNIT VIII"/>
    <property type="match status" value="1"/>
</dbReference>
<dbReference type="Pfam" id="PF00796">
    <property type="entry name" value="PSI_8"/>
    <property type="match status" value="1"/>
</dbReference>
<dbReference type="SUPFAM" id="SSF81540">
    <property type="entry name" value="Subunit VIII of photosystem I reaction centre, PsaI"/>
    <property type="match status" value="1"/>
</dbReference>
<accession>Q85FL2</accession>
<protein>
    <recommendedName>
        <fullName evidence="1">Photosystem I reaction center subunit VIII</fullName>
        <shortName evidence="1">PSI-I</shortName>
    </recommendedName>
</protein>
<gene>
    <name evidence="1" type="primary">psaI</name>
</gene>
<proteinExistence type="evidence at transcript level"/>
<organism>
    <name type="scientific">Adiantum capillus-veneris</name>
    <name type="common">Maidenhair fern</name>
    <dbReference type="NCBI Taxonomy" id="13818"/>
    <lineage>
        <taxon>Eukaryota</taxon>
        <taxon>Viridiplantae</taxon>
        <taxon>Streptophyta</taxon>
        <taxon>Embryophyta</taxon>
        <taxon>Tracheophyta</taxon>
        <taxon>Polypodiopsida</taxon>
        <taxon>Polypodiidae</taxon>
        <taxon>Polypodiales</taxon>
        <taxon>Pteridineae</taxon>
        <taxon>Pteridaceae</taxon>
        <taxon>Vittarioideae</taxon>
        <taxon>Adiantum</taxon>
    </lineage>
</organism>
<evidence type="ECO:0000255" key="1">
    <source>
        <dbReference type="HAMAP-Rule" id="MF_00431"/>
    </source>
</evidence>